<proteinExistence type="inferred from homology"/>
<accession>A7ZJS0</accession>
<gene>
    <name evidence="1" type="primary">rimK</name>
    <name type="ordered locus">EcE24377A_0924</name>
</gene>
<comment type="function">
    <text evidence="1">An L-glutamate ligase that catalyzes the ATP-dependent post-translational addition of glutamate residues to the C-terminus of ribosomal protein bS6 (RpsF). Is also able to catalyze the synthesis of poly-alpha-glutamate in vitro, via ATP hydrolysis from unprotected glutamate as substrate. The number of glutamate residues added to either RpsF or to poly-alpha-glutamate changes with pH.</text>
</comment>
<comment type="cofactor">
    <cofactor evidence="1">
        <name>Mg(2+)</name>
        <dbReference type="ChEBI" id="CHEBI:18420"/>
    </cofactor>
    <cofactor evidence="1">
        <name>Mn(2+)</name>
        <dbReference type="ChEBI" id="CHEBI:29035"/>
    </cofactor>
    <text evidence="1">Binds 2 magnesium or manganese ions per subunit.</text>
</comment>
<comment type="similarity">
    <text evidence="1">Belongs to the RimK family.</text>
</comment>
<dbReference type="EC" id="6.3.2.-" evidence="1"/>
<dbReference type="EMBL" id="CP000800">
    <property type="protein sequence ID" value="ABV19505.1"/>
    <property type="molecule type" value="Genomic_DNA"/>
</dbReference>
<dbReference type="RefSeq" id="WP_000684336.1">
    <property type="nucleotide sequence ID" value="NC_009801.1"/>
</dbReference>
<dbReference type="SMR" id="A7ZJS0"/>
<dbReference type="KEGG" id="ecw:EcE24377A_0924"/>
<dbReference type="HOGENOM" id="CLU_054353_0_1_6"/>
<dbReference type="Proteomes" id="UP000001122">
    <property type="component" value="Chromosome"/>
</dbReference>
<dbReference type="GO" id="GO:0005737">
    <property type="term" value="C:cytoplasm"/>
    <property type="evidence" value="ECO:0007669"/>
    <property type="project" value="TreeGrafter"/>
</dbReference>
<dbReference type="GO" id="GO:0005524">
    <property type="term" value="F:ATP binding"/>
    <property type="evidence" value="ECO:0007669"/>
    <property type="project" value="UniProtKB-UniRule"/>
</dbReference>
<dbReference type="GO" id="GO:0046872">
    <property type="term" value="F:metal ion binding"/>
    <property type="evidence" value="ECO:0007669"/>
    <property type="project" value="UniProtKB-KW"/>
</dbReference>
<dbReference type="GO" id="GO:0018169">
    <property type="term" value="F:ribosomal S6-glutamic acid ligase activity"/>
    <property type="evidence" value="ECO:0007669"/>
    <property type="project" value="UniProtKB-UniRule"/>
</dbReference>
<dbReference type="GO" id="GO:0036211">
    <property type="term" value="P:protein modification process"/>
    <property type="evidence" value="ECO:0007669"/>
    <property type="project" value="InterPro"/>
</dbReference>
<dbReference type="GO" id="GO:0009432">
    <property type="term" value="P:SOS response"/>
    <property type="evidence" value="ECO:0007669"/>
    <property type="project" value="TreeGrafter"/>
</dbReference>
<dbReference type="GO" id="GO:0006412">
    <property type="term" value="P:translation"/>
    <property type="evidence" value="ECO:0007669"/>
    <property type="project" value="UniProtKB-KW"/>
</dbReference>
<dbReference type="FunFam" id="3.40.50.20:FF:000004">
    <property type="entry name" value="Probable alpha-L-glutamate ligase"/>
    <property type="match status" value="1"/>
</dbReference>
<dbReference type="FunFam" id="3.30.1490.20:FF:000005">
    <property type="entry name" value="Probable alpha-L-glutamate ligase 1"/>
    <property type="match status" value="1"/>
</dbReference>
<dbReference type="FunFam" id="3.30.470.20:FF:000016">
    <property type="entry name" value="Ribosomal protein S6--L-glutamate ligase"/>
    <property type="match status" value="1"/>
</dbReference>
<dbReference type="Gene3D" id="3.40.50.20">
    <property type="match status" value="1"/>
</dbReference>
<dbReference type="Gene3D" id="3.30.1490.20">
    <property type="entry name" value="ATP-grasp fold, A domain"/>
    <property type="match status" value="1"/>
</dbReference>
<dbReference type="Gene3D" id="3.30.470.20">
    <property type="entry name" value="ATP-grasp fold, B domain"/>
    <property type="match status" value="1"/>
</dbReference>
<dbReference type="HAMAP" id="MF_01552">
    <property type="entry name" value="RimK"/>
    <property type="match status" value="1"/>
</dbReference>
<dbReference type="InterPro" id="IPR011761">
    <property type="entry name" value="ATP-grasp"/>
</dbReference>
<dbReference type="InterPro" id="IPR013651">
    <property type="entry name" value="ATP-grasp_RimK-type"/>
</dbReference>
<dbReference type="InterPro" id="IPR013815">
    <property type="entry name" value="ATP_grasp_subdomain_1"/>
</dbReference>
<dbReference type="InterPro" id="IPR023533">
    <property type="entry name" value="RimK"/>
</dbReference>
<dbReference type="InterPro" id="IPR041107">
    <property type="entry name" value="Rimk_N"/>
</dbReference>
<dbReference type="InterPro" id="IPR004666">
    <property type="entry name" value="Rp_bS6_RimK/Lys_biosynth_LsyX"/>
</dbReference>
<dbReference type="NCBIfam" id="NF007764">
    <property type="entry name" value="PRK10446.1"/>
    <property type="match status" value="1"/>
</dbReference>
<dbReference type="NCBIfam" id="TIGR00768">
    <property type="entry name" value="rimK_fam"/>
    <property type="match status" value="1"/>
</dbReference>
<dbReference type="PANTHER" id="PTHR21621:SF7">
    <property type="entry name" value="RIBOSOMAL PROTEIN BS6--L-GLUTAMATE LIGASE"/>
    <property type="match status" value="1"/>
</dbReference>
<dbReference type="PANTHER" id="PTHR21621">
    <property type="entry name" value="RIBOSOMAL PROTEIN S6 MODIFICATION PROTEIN"/>
    <property type="match status" value="1"/>
</dbReference>
<dbReference type="Pfam" id="PF08443">
    <property type="entry name" value="RimK"/>
    <property type="match status" value="1"/>
</dbReference>
<dbReference type="Pfam" id="PF18030">
    <property type="entry name" value="Rimk_N"/>
    <property type="match status" value="1"/>
</dbReference>
<dbReference type="SUPFAM" id="SSF56059">
    <property type="entry name" value="Glutathione synthetase ATP-binding domain-like"/>
    <property type="match status" value="1"/>
</dbReference>
<dbReference type="PROSITE" id="PS50975">
    <property type="entry name" value="ATP_GRASP"/>
    <property type="match status" value="1"/>
</dbReference>
<reference key="1">
    <citation type="journal article" date="2008" name="J. Bacteriol.">
        <title>The pangenome structure of Escherichia coli: comparative genomic analysis of E. coli commensal and pathogenic isolates.</title>
        <authorList>
            <person name="Rasko D.A."/>
            <person name="Rosovitz M.J."/>
            <person name="Myers G.S.A."/>
            <person name="Mongodin E.F."/>
            <person name="Fricke W.F."/>
            <person name="Gajer P."/>
            <person name="Crabtree J."/>
            <person name="Sebaihia M."/>
            <person name="Thomson N.R."/>
            <person name="Chaudhuri R."/>
            <person name="Henderson I.R."/>
            <person name="Sperandio V."/>
            <person name="Ravel J."/>
        </authorList>
    </citation>
    <scope>NUCLEOTIDE SEQUENCE [LARGE SCALE GENOMIC DNA]</scope>
    <source>
        <strain>E24377A / ETEC</strain>
    </source>
</reference>
<feature type="chain" id="PRO_1000068834" description="Ribosomal protein bS6--L-glutamate ligase">
    <location>
        <begin position="1"/>
        <end position="300"/>
    </location>
</feature>
<feature type="domain" description="ATP-grasp" evidence="1">
    <location>
        <begin position="104"/>
        <end position="287"/>
    </location>
</feature>
<feature type="binding site" evidence="1">
    <location>
        <position position="141"/>
    </location>
    <ligand>
        <name>ATP</name>
        <dbReference type="ChEBI" id="CHEBI:30616"/>
    </ligand>
</feature>
<feature type="binding site" evidence="1">
    <location>
        <begin position="178"/>
        <end position="179"/>
    </location>
    <ligand>
        <name>ATP</name>
        <dbReference type="ChEBI" id="CHEBI:30616"/>
    </ligand>
</feature>
<feature type="binding site" evidence="1">
    <location>
        <position position="187"/>
    </location>
    <ligand>
        <name>ATP</name>
        <dbReference type="ChEBI" id="CHEBI:30616"/>
    </ligand>
</feature>
<feature type="binding site" evidence="1">
    <location>
        <begin position="211"/>
        <end position="213"/>
    </location>
    <ligand>
        <name>ATP</name>
        <dbReference type="ChEBI" id="CHEBI:30616"/>
    </ligand>
</feature>
<feature type="binding site" evidence="1">
    <location>
        <position position="248"/>
    </location>
    <ligand>
        <name>Mg(2+)</name>
        <dbReference type="ChEBI" id="CHEBI:18420"/>
        <label>1</label>
    </ligand>
</feature>
<feature type="binding site" evidence="1">
    <location>
        <position position="248"/>
    </location>
    <ligand>
        <name>Mn(2+)</name>
        <dbReference type="ChEBI" id="CHEBI:29035"/>
        <label>1</label>
    </ligand>
</feature>
<feature type="binding site" evidence="1">
    <location>
        <position position="260"/>
    </location>
    <ligand>
        <name>Mg(2+)</name>
        <dbReference type="ChEBI" id="CHEBI:18420"/>
        <label>1</label>
    </ligand>
</feature>
<feature type="binding site" evidence="1">
    <location>
        <position position="260"/>
    </location>
    <ligand>
        <name>Mg(2+)</name>
        <dbReference type="ChEBI" id="CHEBI:18420"/>
        <label>2</label>
    </ligand>
</feature>
<feature type="binding site" evidence="1">
    <location>
        <position position="260"/>
    </location>
    <ligand>
        <name>Mn(2+)</name>
        <dbReference type="ChEBI" id="CHEBI:29035"/>
        <label>1</label>
    </ligand>
</feature>
<feature type="binding site" evidence="1">
    <location>
        <position position="260"/>
    </location>
    <ligand>
        <name>Mn(2+)</name>
        <dbReference type="ChEBI" id="CHEBI:29035"/>
        <label>2</label>
    </ligand>
</feature>
<feature type="binding site" evidence="1">
    <location>
        <position position="262"/>
    </location>
    <ligand>
        <name>Mg(2+)</name>
        <dbReference type="ChEBI" id="CHEBI:18420"/>
        <label>2</label>
    </ligand>
</feature>
<feature type="binding site" evidence="1">
    <location>
        <position position="262"/>
    </location>
    <ligand>
        <name>Mn(2+)</name>
        <dbReference type="ChEBI" id="CHEBI:29035"/>
        <label>2</label>
    </ligand>
</feature>
<name>RIMK_ECO24</name>
<keyword id="KW-0067">ATP-binding</keyword>
<keyword id="KW-0436">Ligase</keyword>
<keyword id="KW-0460">Magnesium</keyword>
<keyword id="KW-0464">Manganese</keyword>
<keyword id="KW-0479">Metal-binding</keyword>
<keyword id="KW-0547">Nucleotide-binding</keyword>
<keyword id="KW-0648">Protein biosynthesis</keyword>
<keyword id="KW-1185">Reference proteome</keyword>
<sequence length="300" mass="32463">MKIAILSRDGTLYSCKRLREAAIQRGHLVEILDPLSCYMNINPAASSIHYKGRKLPHFDAVIPRIGTAITFYGTAALRQFEMLGSYPLNESVAIARARDKLRSMQLLARQGIDLPVTGIAHSPDDTSDLIDMVGGAPLVVKLVEGTQGIGVVLAETRQAAESVIDAFRGLNAYILVQEYIKEAQGCDIRCLVVGDEVVAAIERRAKEGDFRSNLHRGGAASVASITPQEREIAIKAARTMALDVAGVDILRANRGPLVMEVNASPGLEGIEKTTGIDIAGKMIRWIERHATTEYCLKTGG</sequence>
<organism>
    <name type="scientific">Escherichia coli O139:H28 (strain E24377A / ETEC)</name>
    <dbReference type="NCBI Taxonomy" id="331111"/>
    <lineage>
        <taxon>Bacteria</taxon>
        <taxon>Pseudomonadati</taxon>
        <taxon>Pseudomonadota</taxon>
        <taxon>Gammaproteobacteria</taxon>
        <taxon>Enterobacterales</taxon>
        <taxon>Enterobacteriaceae</taxon>
        <taxon>Escherichia</taxon>
    </lineage>
</organism>
<protein>
    <recommendedName>
        <fullName evidence="1">Ribosomal protein bS6--L-glutamate ligase</fullName>
        <ecNumber evidence="1">6.3.2.-</ecNumber>
    </recommendedName>
    <alternativeName>
        <fullName evidence="1">Poly-alpha-glutamate synthase</fullName>
    </alternativeName>
    <alternativeName>
        <fullName evidence="1">Ribosomal protein bS6 modification protein</fullName>
    </alternativeName>
</protein>
<evidence type="ECO:0000255" key="1">
    <source>
        <dbReference type="HAMAP-Rule" id="MF_01552"/>
    </source>
</evidence>